<feature type="chain" id="PRO_0000434975" description="Stimulator of interferon genes protein">
    <location>
        <begin position="1"/>
        <end position="377"/>
    </location>
</feature>
<feature type="topological domain" description="Cytoplasmic" evidence="2">
    <location>
        <begin position="1"/>
        <end position="21"/>
    </location>
</feature>
<feature type="transmembrane region" description="Helical; Name=1" evidence="2">
    <location>
        <begin position="22"/>
        <end position="42"/>
    </location>
</feature>
<feature type="topological domain" description="Extracellular" evidence="2">
    <location>
        <begin position="43"/>
        <end position="57"/>
    </location>
</feature>
<feature type="transmembrane region" description="Helical; Name=2" evidence="2">
    <location>
        <begin position="58"/>
        <end position="80"/>
    </location>
</feature>
<feature type="topological domain" description="Cytoplasmic" evidence="2">
    <location>
        <begin position="81"/>
        <end position="101"/>
    </location>
</feature>
<feature type="transmembrane region" description="Helical; Name=3" evidence="2">
    <location>
        <begin position="102"/>
        <end position="122"/>
    </location>
</feature>
<feature type="topological domain" description="Extracellular" evidence="2">
    <location>
        <begin position="123"/>
        <end position="154"/>
    </location>
</feature>
<feature type="transmembrane region" description="Helical; Name=4" evidence="2">
    <location>
        <begin position="155"/>
        <end position="175"/>
    </location>
</feature>
<feature type="topological domain" description="Cytoplasmic" evidence="2">
    <location>
        <begin position="176"/>
        <end position="377"/>
    </location>
</feature>
<feature type="binding site" evidence="3 10">
    <location>
        <position position="206"/>
    </location>
    <ligand>
        <name>2',3'-cGAMP</name>
        <dbReference type="ChEBI" id="CHEBI:143093"/>
    </ligand>
</feature>
<feature type="binding site" evidence="3 8 9">
    <location>
        <position position="206"/>
    </location>
    <ligand>
        <name>3',3'-c-di-GMP</name>
        <dbReference type="ChEBI" id="CHEBI:58805"/>
    </ligand>
</feature>
<feature type="binding site" evidence="3 10">
    <location>
        <position position="272"/>
    </location>
    <ligand>
        <name>2',3'-cGAMP</name>
        <dbReference type="ChEBI" id="CHEBI:143093"/>
    </ligand>
</feature>
<feature type="binding site" evidence="1 3 8 9">
    <location>
        <position position="272"/>
    </location>
    <ligand>
        <name>3',3'-c-di-GMP</name>
        <dbReference type="ChEBI" id="CHEBI:58805"/>
    </ligand>
</feature>
<feature type="binding site" evidence="3 10">
    <location>
        <begin position="278"/>
        <end position="279"/>
    </location>
    <ligand>
        <name>2',3'-cGAMP</name>
        <dbReference type="ChEBI" id="CHEBI:143093"/>
    </ligand>
</feature>
<feature type="binding site" evidence="1 3 8 9">
    <location>
        <position position="278"/>
    </location>
    <ligand>
        <name>3',3'-c-di-GMP</name>
        <dbReference type="ChEBI" id="CHEBI:58805"/>
    </ligand>
</feature>
<feature type="binding site" evidence="1 3 8 9">
    <location>
        <begin position="300"/>
        <end position="303"/>
    </location>
    <ligand>
        <name>3',3'-c-di-GMP</name>
        <dbReference type="ChEBI" id="CHEBI:58805"/>
    </ligand>
</feature>
<feature type="binding site" evidence="3 10">
    <location>
        <position position="303"/>
    </location>
    <ligand>
        <name>2',3'-cGAMP</name>
        <dbReference type="ChEBI" id="CHEBI:143093"/>
    </ligand>
</feature>
<feature type="mutagenesis site" description="Specifically reduces 3'-3' linked cGAMP binding while retaining 2'-3' linked cGAMP recognition." evidence="3">
    <original>F</original>
    <variation>K</variation>
    <location>
        <position position="276"/>
    </location>
</feature>
<feature type="helix" evidence="11">
    <location>
        <begin position="195"/>
        <end position="204"/>
    </location>
</feature>
<feature type="helix" evidence="11">
    <location>
        <begin position="207"/>
        <end position="210"/>
    </location>
</feature>
<feature type="turn" evidence="11">
    <location>
        <begin position="211"/>
        <end position="213"/>
    </location>
</feature>
<feature type="helix" evidence="11">
    <location>
        <begin position="214"/>
        <end position="218"/>
    </location>
</feature>
<feature type="helix" evidence="11">
    <location>
        <begin position="222"/>
        <end position="226"/>
    </location>
</feature>
<feature type="strand" evidence="11">
    <location>
        <begin position="228"/>
        <end position="239"/>
    </location>
</feature>
<feature type="strand" evidence="11">
    <location>
        <begin position="259"/>
        <end position="264"/>
    </location>
</feature>
<feature type="strand" evidence="11">
    <location>
        <begin position="268"/>
        <end position="272"/>
    </location>
</feature>
<feature type="turn" evidence="11">
    <location>
        <begin position="273"/>
        <end position="275"/>
    </location>
</feature>
<feature type="strand" evidence="11">
    <location>
        <begin position="276"/>
        <end position="280"/>
    </location>
</feature>
<feature type="strand" evidence="11">
    <location>
        <begin position="283"/>
        <end position="287"/>
    </location>
</feature>
<feature type="strand" evidence="11">
    <location>
        <begin position="295"/>
        <end position="301"/>
    </location>
</feature>
<feature type="helix" evidence="11">
    <location>
        <begin position="305"/>
        <end position="314"/>
    </location>
</feature>
<feature type="turn" evidence="11">
    <location>
        <begin position="316"/>
        <end position="318"/>
    </location>
</feature>
<feature type="helix" evidence="11">
    <location>
        <begin position="321"/>
        <end position="340"/>
    </location>
</feature>
<feature type="helix" evidence="11">
    <location>
        <begin position="343"/>
        <end position="345"/>
    </location>
</feature>
<feature type="strand" evidence="11">
    <location>
        <begin position="348"/>
        <end position="354"/>
    </location>
</feature>
<feature type="strand" evidence="12">
    <location>
        <begin position="356"/>
        <end position="358"/>
    </location>
</feature>
<feature type="helix" evidence="11">
    <location>
        <begin position="360"/>
        <end position="369"/>
    </location>
</feature>
<organism>
    <name type="scientific">Nematostella vectensis</name>
    <name type="common">Starlet sea anemone</name>
    <dbReference type="NCBI Taxonomy" id="45351"/>
    <lineage>
        <taxon>Eukaryota</taxon>
        <taxon>Metazoa</taxon>
        <taxon>Cnidaria</taxon>
        <taxon>Anthozoa</taxon>
        <taxon>Hexacorallia</taxon>
        <taxon>Actiniaria</taxon>
        <taxon>Edwardsiidae</taxon>
        <taxon>Nematostella</taxon>
    </lineage>
</organism>
<name>STING_NEMVE</name>
<protein>
    <recommendedName>
        <fullName evidence="5">Stimulator of interferon genes protein</fullName>
        <shortName evidence="6">NvSTING</shortName>
        <shortName evidence="5">STING</shortName>
    </recommendedName>
</protein>
<sequence>MRRAEENNGFGTIPKRRNQHTPFYASIGMIVVIIVAFTSYHITSYGDDRNRAMRQYSFTFSLAYLAFLVGELLRRCCLFAEEYRHIETRYNGSLKKAIQTTFSFGHNNVLFVASLLFFVVFVASNDPNGSSSVIQGNSTAEPHTEMRQTSGWQGLWGQFIISALLTPLVVHLLGLRELSKVEESQLNEKENKNVADGLAWSYYFGYLKFVLPELEKQIEKTSKFRSKEKFVKKMFILIPSNCFWDDKIPGSDYDPQNRITFEGNTEPLEKTRGGVFLRHYKHSVYEIKDGENEPWFCIMEYATPLLTLYDMSVAQPGELSREERDAQVVVFLRKLQDILEGDRACQGKYELVTFSPDRDLADVMLRKLKDSELEIGG</sequence>
<comment type="function">
    <text evidence="3 4">Sensor of cytosolic DNA from bacteria and viruses that promotes autophagy (PubMed:30842662). Acts by recognizing and binding cyclic GMP-AMP (cGAMP), a messenger produced by CGAS in response to DNA in the cytosol (PubMed:26300263, PubMed:30842662). Following cGAMP-binding, promotes the formation of autophagosomes, leading to target cytosolic DNA for degradation by the lysosome (PubMed:30842662). Exhibits guanine base-specific ligand recognition. Binds 3'-3'linked cGAMP, 2'-3' linked cGAMP and 3'-3' linked c-di-GMP with much greater affinity as compared to 3'-3' linked c-di-AMP (PubMed:26300263). Lacks the C-terminal tail (CTT) found in mammalian orthologs which is essential for interferon signaling (PubMed:26300263).</text>
</comment>
<comment type="subunit">
    <text evidence="3">Homodimer.</text>
</comment>
<comment type="subcellular location">
    <subcellularLocation>
        <location evidence="1">Endoplasmic reticulum membrane</location>
        <topology evidence="2">Multi-pass membrane protein</topology>
    </subcellularLocation>
</comment>
<comment type="similarity">
    <text evidence="7">Belongs to the TMEM173 family.</text>
</comment>
<reference key="1">
    <citation type="journal article" date="2007" name="Science">
        <title>Sea anemone genome reveals ancestral eumetazoan gene repertoire and genomic organization.</title>
        <authorList>
            <person name="Putnam N.H."/>
            <person name="Srivastava M."/>
            <person name="Hellsten U."/>
            <person name="Dirks B."/>
            <person name="Chapman J."/>
            <person name="Salamov A."/>
            <person name="Terry A."/>
            <person name="Shapiro H."/>
            <person name="Lindquist E."/>
            <person name="Kapitonov V.V."/>
            <person name="Jurka J."/>
            <person name="Genikhovich G."/>
            <person name="Grigoriev I.V."/>
            <person name="Lucas S.M."/>
            <person name="Steele R.E."/>
            <person name="Finnerty J.R."/>
            <person name="Technau U."/>
            <person name="Martindale M.Q."/>
            <person name="Rokhsar D.S."/>
        </authorList>
    </citation>
    <scope>NUCLEOTIDE SEQUENCE [LARGE SCALE GENOMIC DNA]</scope>
    <source>
        <strain>CH2 X CH6</strain>
    </source>
</reference>
<reference key="2">
    <citation type="journal article" date="2015" name="Mol. Cell">
        <title>Ancient origin of cGAS-STING reveals mechanism of universal 2',3' cGAMP signaling.</title>
        <authorList>
            <person name="Kranzusch P.J."/>
            <person name="Wilson S.C."/>
            <person name="Lee A.S."/>
            <person name="Berger J.M."/>
            <person name="Doudna J.A."/>
            <person name="Vance R.E."/>
        </authorList>
    </citation>
    <scope>X-RAY CRYSTALLOGRAPHY (1.84 ANGSTROMS) OF 178-377 IN COMPLEXES WITH 2'3'-CGAMP AND C-DI-GMP</scope>
    <scope>SUBUNIT</scope>
    <scope>FUNCTION</scope>
    <scope>MUTAGENESIS OF PHE-276</scope>
</reference>
<reference key="3">
    <citation type="journal article" date="2019" name="Nature">
        <title>Autophagy induction via STING trafficking is a primordial function of the cGAS pathway.</title>
        <authorList>
            <person name="Gui X."/>
            <person name="Yang H."/>
            <person name="Li T."/>
            <person name="Tan X."/>
            <person name="Shi P."/>
            <person name="Li M."/>
            <person name="Du F."/>
            <person name="Chen Z.J."/>
        </authorList>
    </citation>
    <scope>FUNCTION</scope>
</reference>
<accession>A7SLZ2</accession>
<evidence type="ECO:0000250" key="1">
    <source>
        <dbReference type="UniProtKB" id="Q86WV6"/>
    </source>
</evidence>
<evidence type="ECO:0000255" key="2"/>
<evidence type="ECO:0000269" key="3">
    <source>
    </source>
</evidence>
<evidence type="ECO:0000269" key="4">
    <source>
    </source>
</evidence>
<evidence type="ECO:0000303" key="5">
    <source>
    </source>
</evidence>
<evidence type="ECO:0000303" key="6">
    <source>
    </source>
</evidence>
<evidence type="ECO:0000305" key="7"/>
<evidence type="ECO:0007744" key="8">
    <source>
        <dbReference type="PDB" id="5CFL"/>
    </source>
</evidence>
<evidence type="ECO:0007744" key="9">
    <source>
        <dbReference type="PDB" id="5CFP"/>
    </source>
</evidence>
<evidence type="ECO:0007744" key="10">
    <source>
        <dbReference type="PDB" id="5CFQ"/>
    </source>
</evidence>
<evidence type="ECO:0007829" key="11">
    <source>
        <dbReference type="PDB" id="5CFL"/>
    </source>
</evidence>
<evidence type="ECO:0007829" key="12">
    <source>
        <dbReference type="PDB" id="5CFR"/>
    </source>
</evidence>
<proteinExistence type="evidence at protein level"/>
<gene>
    <name type="ORF">v1g246111</name>
</gene>
<dbReference type="EMBL" id="DS469703">
    <property type="protein sequence ID" value="EDO35285.1"/>
    <property type="molecule type" value="Genomic_DNA"/>
</dbReference>
<dbReference type="RefSeq" id="XP_001627385.1">
    <property type="nucleotide sequence ID" value="XM_001627335.1"/>
</dbReference>
<dbReference type="PDB" id="5CFL">
    <property type="method" value="X-ray"/>
    <property type="resolution" value="1.84 A"/>
    <property type="chains" value="A/B=193-377"/>
</dbReference>
<dbReference type="PDB" id="5CFM">
    <property type="method" value="X-ray"/>
    <property type="resolution" value="1.99 A"/>
    <property type="chains" value="A/B=193-377"/>
</dbReference>
<dbReference type="PDB" id="5CFN">
    <property type="method" value="X-ray"/>
    <property type="resolution" value="2.95 A"/>
    <property type="chains" value="A/B=193-377"/>
</dbReference>
<dbReference type="PDB" id="5CFO">
    <property type="method" value="X-ray"/>
    <property type="resolution" value="2.10 A"/>
    <property type="chains" value="A/B=178-377"/>
</dbReference>
<dbReference type="PDB" id="5CFP">
    <property type="method" value="X-ray"/>
    <property type="resolution" value="2.07 A"/>
    <property type="chains" value="A/B=178-377"/>
</dbReference>
<dbReference type="PDB" id="5CFQ">
    <property type="method" value="X-ray"/>
    <property type="resolution" value="2.10 A"/>
    <property type="chains" value="A/B=193-377"/>
</dbReference>
<dbReference type="PDB" id="5CFR">
    <property type="method" value="X-ray"/>
    <property type="resolution" value="2.85 A"/>
    <property type="chains" value="A/B=178-377"/>
</dbReference>
<dbReference type="PDBsum" id="5CFL"/>
<dbReference type="PDBsum" id="5CFM"/>
<dbReference type="PDBsum" id="5CFN"/>
<dbReference type="PDBsum" id="5CFO"/>
<dbReference type="PDBsum" id="5CFP"/>
<dbReference type="PDBsum" id="5CFQ"/>
<dbReference type="PDBsum" id="5CFR"/>
<dbReference type="SMR" id="A7SLZ2"/>
<dbReference type="FunCoup" id="A7SLZ2">
    <property type="interactions" value="34"/>
</dbReference>
<dbReference type="STRING" id="45351.A7SLZ2"/>
<dbReference type="EnsemblMetazoa" id="EDO35285">
    <property type="protein sequence ID" value="EDO35285"/>
    <property type="gene ID" value="NEMVEDRAFT_v1g246111"/>
</dbReference>
<dbReference type="KEGG" id="nve:5506676"/>
<dbReference type="eggNOG" id="ENOG502R15M">
    <property type="taxonomic scope" value="Eukaryota"/>
</dbReference>
<dbReference type="HOGENOM" id="CLU_062449_0_0_1"/>
<dbReference type="InParanoid" id="A7SLZ2"/>
<dbReference type="OMA" id="QYGQAGF"/>
<dbReference type="OrthoDB" id="6053839at2759"/>
<dbReference type="EvolutionaryTrace" id="A7SLZ2"/>
<dbReference type="Proteomes" id="UP000001593">
    <property type="component" value="Unassembled WGS sequence"/>
</dbReference>
<dbReference type="GO" id="GO:0005776">
    <property type="term" value="C:autophagosome"/>
    <property type="evidence" value="ECO:0000318"/>
    <property type="project" value="GO_Central"/>
</dbReference>
<dbReference type="GO" id="GO:0005789">
    <property type="term" value="C:endoplasmic reticulum membrane"/>
    <property type="evidence" value="ECO:0000318"/>
    <property type="project" value="GO_Central"/>
</dbReference>
<dbReference type="GO" id="GO:0061507">
    <property type="term" value="F:2',3'-cyclic GMP-AMP binding"/>
    <property type="evidence" value="ECO:0000314"/>
    <property type="project" value="UniProtKB"/>
</dbReference>
<dbReference type="GO" id="GO:0035438">
    <property type="term" value="F:cyclic-di-GMP binding"/>
    <property type="evidence" value="ECO:0000314"/>
    <property type="project" value="UniProtKB"/>
</dbReference>
<dbReference type="GO" id="GO:0002218">
    <property type="term" value="P:activation of innate immune response"/>
    <property type="evidence" value="ECO:0007669"/>
    <property type="project" value="InterPro"/>
</dbReference>
<dbReference type="GO" id="GO:0000045">
    <property type="term" value="P:autophagosome assembly"/>
    <property type="evidence" value="ECO:0000318"/>
    <property type="project" value="GO_Central"/>
</dbReference>
<dbReference type="GO" id="GO:0045087">
    <property type="term" value="P:innate immune response"/>
    <property type="evidence" value="ECO:0000318"/>
    <property type="project" value="GO_Central"/>
</dbReference>
<dbReference type="GO" id="GO:0016239">
    <property type="term" value="P:positive regulation of macroautophagy"/>
    <property type="evidence" value="ECO:0000314"/>
    <property type="project" value="UniProtKB"/>
</dbReference>
<dbReference type="GO" id="GO:0032481">
    <property type="term" value="P:positive regulation of type I interferon production"/>
    <property type="evidence" value="ECO:0007669"/>
    <property type="project" value="InterPro"/>
</dbReference>
<dbReference type="GO" id="GO:0061709">
    <property type="term" value="P:reticulophagy"/>
    <property type="evidence" value="ECO:0000318"/>
    <property type="project" value="GO_Central"/>
</dbReference>
<dbReference type="CDD" id="cd22658">
    <property type="entry name" value="STING_C_metazoan-like"/>
    <property type="match status" value="1"/>
</dbReference>
<dbReference type="FunFam" id="1.20.5.5200:FF:000001">
    <property type="entry name" value="Stimulator of interferon genes protein"/>
    <property type="match status" value="1"/>
</dbReference>
<dbReference type="FunFam" id="3.40.50.12100:FF:000001">
    <property type="entry name" value="Stimulator of interferon genes protein"/>
    <property type="match status" value="1"/>
</dbReference>
<dbReference type="Gene3D" id="1.20.5.5200">
    <property type="match status" value="1"/>
</dbReference>
<dbReference type="Gene3D" id="3.40.50.12100">
    <property type="entry name" value="Stimulator of interferon genes protein"/>
    <property type="match status" value="1"/>
</dbReference>
<dbReference type="InterPro" id="IPR029158">
    <property type="entry name" value="STING"/>
</dbReference>
<dbReference type="InterPro" id="IPR047191">
    <property type="entry name" value="STING_C_chordates"/>
</dbReference>
<dbReference type="InterPro" id="IPR038623">
    <property type="entry name" value="STING_C_sf"/>
</dbReference>
<dbReference type="InterPro" id="IPR055432">
    <property type="entry name" value="STING_LBD"/>
</dbReference>
<dbReference type="InterPro" id="IPR055434">
    <property type="entry name" value="STING_TM"/>
</dbReference>
<dbReference type="PANTHER" id="PTHR34339">
    <property type="entry name" value="STIMULATOR OF INTERFERON GENES PROTEIN"/>
    <property type="match status" value="1"/>
</dbReference>
<dbReference type="PANTHER" id="PTHR34339:SF1">
    <property type="entry name" value="STIMULATOR OF INTERFERON GENES PROTEIN"/>
    <property type="match status" value="1"/>
</dbReference>
<dbReference type="Pfam" id="PF15009">
    <property type="entry name" value="STING_LBD"/>
    <property type="match status" value="1"/>
</dbReference>
<dbReference type="Pfam" id="PF23417">
    <property type="entry name" value="STING_TM"/>
    <property type="match status" value="1"/>
</dbReference>
<keyword id="KW-0002">3D-structure</keyword>
<keyword id="KW-0072">Autophagy</keyword>
<keyword id="KW-0256">Endoplasmic reticulum</keyword>
<keyword id="KW-0472">Membrane</keyword>
<keyword id="KW-0547">Nucleotide-binding</keyword>
<keyword id="KW-1185">Reference proteome</keyword>
<keyword id="KW-0812">Transmembrane</keyword>
<keyword id="KW-1133">Transmembrane helix</keyword>